<sequence length="91" mass="10581">MTTQRRKVELDPDTVERDLARLVLTVVELLRQLMERQALRRVEGGDLTEEQEERIGLTLMLLEDRMELLRTRFGLEPEDLNLDLGPLGPLL</sequence>
<name>GVPK_STRX0</name>
<proteinExistence type="evidence at transcript level"/>
<protein>
    <recommendedName>
        <fullName evidence="3">Gas vesicle protein K</fullName>
    </recommendedName>
</protein>
<keyword id="KW-0304">Gas vesicle</keyword>
<keyword id="KW-1185">Reference proteome</keyword>
<evidence type="ECO:0000250" key="1">
    <source>
        <dbReference type="UniProtKB" id="P24375"/>
    </source>
</evidence>
<evidence type="ECO:0000269" key="2">
    <source>
    </source>
</evidence>
<evidence type="ECO:0000303" key="3">
    <source>
    </source>
</evidence>
<evidence type="ECO:0000305" key="4"/>
<evidence type="ECO:0000305" key="5">
    <source>
    </source>
</evidence>
<evidence type="ECO:0000312" key="6">
    <source>
        <dbReference type="EMBL" id="OKK04372.1"/>
    </source>
</evidence>
<dbReference type="EMBL" id="LIYH01000003">
    <property type="protein sequence ID" value="OKK04372.1"/>
    <property type="molecule type" value="Genomic_DNA"/>
</dbReference>
<dbReference type="SMR" id="A0A1Q5LQZ5"/>
<dbReference type="STRING" id="1703937.AMK26_13445"/>
<dbReference type="OrthoDB" id="5772958at2"/>
<dbReference type="Proteomes" id="UP000186270">
    <property type="component" value="Unassembled WGS sequence"/>
</dbReference>
<dbReference type="GO" id="GO:0031411">
    <property type="term" value="C:gas vesicle"/>
    <property type="evidence" value="ECO:0007669"/>
    <property type="project" value="UniProtKB-SubCell"/>
</dbReference>
<dbReference type="GO" id="GO:0031412">
    <property type="term" value="P:gas vesicle organization"/>
    <property type="evidence" value="ECO:0007669"/>
    <property type="project" value="InterPro"/>
</dbReference>
<dbReference type="InterPro" id="IPR007805">
    <property type="entry name" value="GvpK"/>
</dbReference>
<dbReference type="PANTHER" id="PTHR40137">
    <property type="entry name" value="PROTEIN GVPK 1"/>
    <property type="match status" value="1"/>
</dbReference>
<dbReference type="PANTHER" id="PTHR40137:SF2">
    <property type="entry name" value="PROTEIN GVPK 1"/>
    <property type="match status" value="1"/>
</dbReference>
<dbReference type="Pfam" id="PF05121">
    <property type="entry name" value="GvpK"/>
    <property type="match status" value="1"/>
</dbReference>
<reference evidence="6" key="1">
    <citation type="journal article" date="2016" name="MBio">
        <title>Strain Prioritization and Genome Mining for Enediyne Natural Products.</title>
        <authorList>
            <person name="Yan X."/>
            <person name="Ge H."/>
            <person name="Huang T."/>
            <person name="Hindra X."/>
            <person name="Yang D."/>
            <person name="Teng Q."/>
            <person name="Crnovcic I."/>
            <person name="Li X."/>
            <person name="Rudolf J.D."/>
            <person name="Lohman J.R."/>
            <person name="Gansemans Y."/>
            <person name="Zhu X."/>
            <person name="Huang Y."/>
            <person name="Zhao L.X."/>
            <person name="Jiang Y."/>
            <person name="Van Nieuwerburgh F."/>
            <person name="Rader C."/>
            <person name="Duan Y."/>
            <person name="Shen B."/>
        </authorList>
    </citation>
    <scope>NUCLEOTIDE SEQUENCE [LARGE SCALE GENOMIC DNA]</scope>
    <source>
        <strain>CB03234</strain>
    </source>
</reference>
<reference key="2">
    <citation type="journal article" date="2019" name="Appl. Microbiol. Biotechnol.">
        <title>Discovery of gas vesicles in Streptomyces sp. CB03234-S and potential effects of gas vesicle gene overexpression on morphological and metabolic changes in streptomycetes.</title>
        <authorList>
            <person name="Huang R."/>
            <person name="Lin J."/>
            <person name="Gao D."/>
            <person name="Zhang F."/>
            <person name="Yi L."/>
            <person name="Huang Y."/>
            <person name="Yan X."/>
            <person name="Duan Y."/>
            <person name="Zhu X."/>
        </authorList>
    </citation>
    <scope>INDUCTION</scope>
    <scope>PROBABLE GAS VESICLE FORMATION</scope>
    <source>
        <strain>CB03234</strain>
    </source>
</reference>
<gene>
    <name evidence="3" type="primary">gvpK</name>
    <name evidence="6" type="ORF">AMK26_13445</name>
</gene>
<organism>
    <name type="scientific">Streptomyces sp. (strain CB03234)</name>
    <dbReference type="NCBI Taxonomy" id="1703937"/>
    <lineage>
        <taxon>Bacteria</taxon>
        <taxon>Bacillati</taxon>
        <taxon>Actinomycetota</taxon>
        <taxon>Actinomycetes</taxon>
        <taxon>Kitasatosporales</taxon>
        <taxon>Streptomycetaceae</taxon>
        <taxon>Streptomyces</taxon>
    </lineage>
</organism>
<accession>A0A1Q5LQZ5</accession>
<feature type="chain" id="PRO_0000458447" description="Gas vesicle protein K">
    <location>
        <begin position="1"/>
        <end position="91"/>
    </location>
</feature>
<comment type="function">
    <text evidence="1 4">Might be involved in nucleating gas vesicle formation (By similarity). Gas vesicles are hollow, gas filled proteinaceous nanostructures found in some microorganisms. It is not clear what function gas vesicles perform in soil bacteria (Probable).</text>
</comment>
<comment type="subcellular location">
    <subcellularLocation>
        <location evidence="1 5">Gas vesicle</location>
    </subcellularLocation>
</comment>
<comment type="induction">
    <text evidence="2">Gas vesicle production is induced by growth conditions that promote production of secondary metabolites tiancimycin A and B.</text>
</comment>
<comment type="miscellaneous">
    <text evidence="2">This strain probably produces some gas vesicles from the probable gvpO-gvpA-gvpF-gvpG-gvpJ-gvpL-gvpS-gvpK operon; it can be induced to produce more under certain growth conditions.</text>
</comment>
<comment type="similarity">
    <text evidence="4">Belongs to the gas vesicle GvpK family.</text>
</comment>